<sequence>MFMSSSSSSHARRPQLSSFSYLHPPLPFPGLSFFNTRDKRVNFDSTRIICIAKSKPARTTPEYSDVLQTGLPLIVEDDIQEQEEPLEVSLENQIRQGVDIVKSMLGSMEDGETSISAYDTAWVALVENIHHPGSPQFPSSLQWIANNQLPDGSWGDPDVFLAHDRLINTLACVIALKKWNIHPHKCKRGLSFVKENISKLEKENEEHMLIGFEIAFPSLLEMAKKLGIEIPDDSPALQDIYTKRDLKLTRIPKDIMHNVPTTLLYSLEGLPSLDWEKLVKLQCTDGSFLFSPSSTACALMHTKDGNCFSYINNLVHKFNGGVPTVYPVDLFEHIWCVDRLQRLGISRFFHPEIKECLGYVHRYWTKDGICWARNSRVQDIDDTAMGFRLLRLHGYEVSPDVFKQFRKGDEFVCFMGQSNQAITGIYNLYRASQMMFPEETILEEAKKFSVNFLREKRAASELLDKWIITKDLPNEVGFALDVPWYACLPRVETRLYIEQYGGQDDVWIGKTLYRMPYVNNNVYLELAKLDYNNCQSLHRIEWDNIQKWYEGYNLGGFGVNKRSLLRTYFLATSNIFEPERSVERLTWAKTAILVQAIASYFENSREERIEFANEFQKFPNTRGYINGRRLDVKQATKGLIEMVFATLNQFSLDALVVHGEDITHHLYQSWEKWVLTWQEGGDRREGEAELLVQTINLMAGHTHSQEEELYERLFKLTNTVCHQLGHYHHLNKDKQPQQVEDNGGYNNSNPESISKLQIESDMRELVQLVLNSSDGMDSNIKQTFLAVTKSFYYTAFTHPGTVNYHIAKVLFERVV</sequence>
<dbReference type="EC" id="5.5.1.28" evidence="5"/>
<dbReference type="EMBL" id="KP889111">
    <property type="protein sequence ID" value="ALE19956.1"/>
    <property type="molecule type" value="mRNA"/>
</dbReference>
<dbReference type="SMR" id="A0A0M5L832"/>
<dbReference type="GO" id="GO:0009507">
    <property type="term" value="C:chloroplast"/>
    <property type="evidence" value="ECO:0007669"/>
    <property type="project" value="UniProtKB-SubCell"/>
</dbReference>
<dbReference type="GO" id="GO:0016853">
    <property type="term" value="F:isomerase activity"/>
    <property type="evidence" value="ECO:0007669"/>
    <property type="project" value="UniProtKB-KW"/>
</dbReference>
<dbReference type="GO" id="GO:0000287">
    <property type="term" value="F:magnesium ion binding"/>
    <property type="evidence" value="ECO:0007669"/>
    <property type="project" value="InterPro"/>
</dbReference>
<dbReference type="GO" id="GO:0010333">
    <property type="term" value="F:terpene synthase activity"/>
    <property type="evidence" value="ECO:0007669"/>
    <property type="project" value="InterPro"/>
</dbReference>
<dbReference type="GO" id="GO:0009686">
    <property type="term" value="P:gibberellin biosynthetic process"/>
    <property type="evidence" value="ECO:0007669"/>
    <property type="project" value="TreeGrafter"/>
</dbReference>
<dbReference type="FunFam" id="1.50.10.160:FF:000001">
    <property type="entry name" value="Ent-copalyl diphosphate synthase"/>
    <property type="match status" value="1"/>
</dbReference>
<dbReference type="FunFam" id="1.50.10.130:FF:000002">
    <property type="entry name" value="Ent-copalyl diphosphate synthase, chloroplastic"/>
    <property type="match status" value="1"/>
</dbReference>
<dbReference type="Gene3D" id="1.50.10.160">
    <property type="match status" value="1"/>
</dbReference>
<dbReference type="Gene3D" id="1.10.600.10">
    <property type="entry name" value="Farnesyl Diphosphate Synthase"/>
    <property type="match status" value="1"/>
</dbReference>
<dbReference type="Gene3D" id="1.50.10.130">
    <property type="entry name" value="Terpene synthase, N-terminal domain"/>
    <property type="match status" value="1"/>
</dbReference>
<dbReference type="InterPro" id="IPR008949">
    <property type="entry name" value="Isoprenoid_synthase_dom_sf"/>
</dbReference>
<dbReference type="InterPro" id="IPR001906">
    <property type="entry name" value="Terpene_synth_N"/>
</dbReference>
<dbReference type="InterPro" id="IPR036965">
    <property type="entry name" value="Terpene_synth_N_sf"/>
</dbReference>
<dbReference type="InterPro" id="IPR050148">
    <property type="entry name" value="Terpene_synthase-like"/>
</dbReference>
<dbReference type="InterPro" id="IPR005630">
    <property type="entry name" value="Terpene_synthase_metal-bd"/>
</dbReference>
<dbReference type="InterPro" id="IPR008930">
    <property type="entry name" value="Terpenoid_cyclase/PrenylTrfase"/>
</dbReference>
<dbReference type="PANTHER" id="PTHR31739">
    <property type="entry name" value="ENT-COPALYL DIPHOSPHATE SYNTHASE, CHLOROPLASTIC"/>
    <property type="match status" value="1"/>
</dbReference>
<dbReference type="PANTHER" id="PTHR31739:SF4">
    <property type="entry name" value="ENT-COPALYL DIPHOSPHATE SYNTHASE, CHLOROPLASTIC"/>
    <property type="match status" value="1"/>
</dbReference>
<dbReference type="Pfam" id="PF01397">
    <property type="entry name" value="Terpene_synth"/>
    <property type="match status" value="1"/>
</dbReference>
<dbReference type="Pfam" id="PF03936">
    <property type="entry name" value="Terpene_synth_C"/>
    <property type="match status" value="1"/>
</dbReference>
<dbReference type="SFLD" id="SFLDG01014">
    <property type="entry name" value="Terpene_Cyclase_Like_1_N-term"/>
    <property type="match status" value="1"/>
</dbReference>
<dbReference type="SFLD" id="SFLDG01605">
    <property type="entry name" value="Terpene_Cyclase_Like_1_N-term"/>
    <property type="match status" value="1"/>
</dbReference>
<dbReference type="SUPFAM" id="SSF48239">
    <property type="entry name" value="Terpenoid cyclases/Protein prenyltransferases"/>
    <property type="match status" value="2"/>
</dbReference>
<dbReference type="SUPFAM" id="SSF48576">
    <property type="entry name" value="Terpenoid synthases"/>
    <property type="match status" value="1"/>
</dbReference>
<proteinExistence type="evidence at protein level"/>
<feature type="transit peptide" description="Chloroplast" evidence="4">
    <location>
        <begin position="1"/>
        <end position="51"/>
    </location>
</feature>
<feature type="chain" id="PRO_0000447690" description="(-)-kolavenyl diphosphate synthase TPS14, chloroplastic">
    <location>
        <begin position="52"/>
        <end position="815"/>
    </location>
</feature>
<feature type="short sequence motif" description="DXDD motif" evidence="8">
    <location>
        <begin position="379"/>
        <end position="382"/>
    </location>
</feature>
<feature type="binding site" evidence="3">
    <location>
        <position position="247"/>
    </location>
    <ligand>
        <name>substrate</name>
    </ligand>
</feature>
<feature type="binding site" evidence="2">
    <location>
        <position position="379"/>
    </location>
    <ligand>
        <name>Mg(2+)</name>
        <dbReference type="ChEBI" id="CHEBI:18420"/>
    </ligand>
</feature>
<feature type="binding site" evidence="2">
    <location>
        <position position="381"/>
    </location>
    <ligand>
        <name>Mg(2+)</name>
        <dbReference type="ChEBI" id="CHEBI:18420"/>
    </ligand>
</feature>
<feature type="binding site" evidence="3">
    <location>
        <position position="465"/>
    </location>
    <ligand>
        <name>substrate</name>
    </ligand>
</feature>
<accession>A0A0M5L832</accession>
<evidence type="ECO:0000250" key="1">
    <source>
        <dbReference type="UniProtKB" id="A0A1S5RW73"/>
    </source>
</evidence>
<evidence type="ECO:0000250" key="2">
    <source>
        <dbReference type="UniProtKB" id="C7BKP9"/>
    </source>
</evidence>
<evidence type="ECO:0000250" key="3">
    <source>
        <dbReference type="UniProtKB" id="Q38802"/>
    </source>
</evidence>
<evidence type="ECO:0000255" key="4"/>
<evidence type="ECO:0000269" key="5">
    <source>
    </source>
</evidence>
<evidence type="ECO:0000303" key="6">
    <source>
    </source>
</evidence>
<evidence type="ECO:0000305" key="7"/>
<evidence type="ECO:0000305" key="8">
    <source>
    </source>
</evidence>
<name>TPS14_TRIWF</name>
<gene>
    <name evidence="6" type="primary">TPS14</name>
</gene>
<organism>
    <name type="scientific">Tripterygium wilfordii</name>
    <name type="common">Thunder God vine</name>
    <dbReference type="NCBI Taxonomy" id="458696"/>
    <lineage>
        <taxon>Eukaryota</taxon>
        <taxon>Viridiplantae</taxon>
        <taxon>Streptophyta</taxon>
        <taxon>Embryophyta</taxon>
        <taxon>Tracheophyta</taxon>
        <taxon>Spermatophyta</taxon>
        <taxon>Magnoliopsida</taxon>
        <taxon>eudicotyledons</taxon>
        <taxon>Gunneridae</taxon>
        <taxon>Pentapetalae</taxon>
        <taxon>rosids</taxon>
        <taxon>fabids</taxon>
        <taxon>Celastrales</taxon>
        <taxon>Celastraceae</taxon>
        <taxon>Tripterygium</taxon>
    </lineage>
</organism>
<comment type="function">
    <text evidence="5">Diterpene synthase that catalyzes the formation of (-)-kolavenyl diphosphate from geranylgeranyl diphosphate (GGPP).</text>
</comment>
<comment type="catalytic activity">
    <reaction evidence="5">
        <text>(2E,6E,10E)-geranylgeranyl diphosphate = (-)-kolavenyl diphosphate</text>
        <dbReference type="Rhea" id="RHEA:54684"/>
        <dbReference type="ChEBI" id="CHEBI:58756"/>
        <dbReference type="ChEBI" id="CHEBI:138310"/>
        <dbReference type="EC" id="5.5.1.28"/>
    </reaction>
    <physiologicalReaction direction="left-to-right" evidence="5">
        <dbReference type="Rhea" id="RHEA:54685"/>
    </physiologicalReaction>
</comment>
<comment type="cofactor">
    <cofactor evidence="1">
        <name>Mg(2+)</name>
        <dbReference type="ChEBI" id="CHEBI:18420"/>
    </cofactor>
</comment>
<comment type="activity regulation">
    <text evidence="1">Inhibited by high concentrations of magnesium.</text>
</comment>
<comment type="subcellular location">
    <subcellularLocation>
        <location evidence="4">Plastid</location>
        <location evidence="4">Chloroplast</location>
    </subcellularLocation>
</comment>
<comment type="domain">
    <text evidence="8">The Asp-Xaa-Asp-Asp (DXDD) motif is important for the catalytic activity through binding to Mg(2+).</text>
</comment>
<comment type="similarity">
    <text evidence="7">Belongs to the terpene synthase family. Tpsc subfamily.</text>
</comment>
<protein>
    <recommendedName>
        <fullName evidence="7">(-)-kolavenyl diphosphate synthase TPS14, chloroplastic</fullName>
        <ecNumber evidence="5">5.5.1.28</ecNumber>
    </recommendedName>
    <alternativeName>
        <fullName evidence="6">Terpene synthase 14</fullName>
        <shortName evidence="6">TwTPS14</shortName>
    </alternativeName>
</protein>
<reference key="1">
    <citation type="journal article" date="2016" name="Angew. Chem. Int. Ed.">
        <title>Expanding the landscape of diterpene structural diversity through stereochemically controlled combinatorial biosynthesis.</title>
        <authorList>
            <person name="Andersen-Ranberg J."/>
            <person name="Kongstad K.T."/>
            <person name="Nielsen M.T."/>
            <person name="Jensen N.B."/>
            <person name="Pateraki I."/>
            <person name="Bach S.S."/>
            <person name="Hamberger B."/>
            <person name="Zerbe P."/>
            <person name="Staerk D."/>
            <person name="Bohlmann J."/>
            <person name="Moeller B.L."/>
            <person name="Hamberger B."/>
        </authorList>
    </citation>
    <scope>NUCLEOTIDE SEQUENCE [MRNA]</scope>
    <scope>FUNCTION</scope>
    <scope>CATALYTIC ACTIVITY</scope>
    <scope>DXDD MOTIF</scope>
</reference>
<keyword id="KW-0150">Chloroplast</keyword>
<keyword id="KW-0413">Isomerase</keyword>
<keyword id="KW-0460">Magnesium</keyword>
<keyword id="KW-0479">Metal-binding</keyword>
<keyword id="KW-0934">Plastid</keyword>
<keyword id="KW-0809">Transit peptide</keyword>